<dbReference type="EMBL" id="CP000097">
    <property type="protein sequence ID" value="ABB26117.1"/>
    <property type="molecule type" value="Genomic_DNA"/>
</dbReference>
<dbReference type="RefSeq" id="WP_011359944.1">
    <property type="nucleotide sequence ID" value="NC_007513.1"/>
</dbReference>
<dbReference type="SMR" id="Q3AXR9"/>
<dbReference type="STRING" id="316279.Syncc9902_1153"/>
<dbReference type="KEGG" id="sye:Syncc9902_1153"/>
<dbReference type="eggNOG" id="COG0333">
    <property type="taxonomic scope" value="Bacteria"/>
</dbReference>
<dbReference type="HOGENOM" id="CLU_199882_0_0_3"/>
<dbReference type="OrthoDB" id="541730at2"/>
<dbReference type="Proteomes" id="UP000002712">
    <property type="component" value="Chromosome"/>
</dbReference>
<dbReference type="GO" id="GO:0015934">
    <property type="term" value="C:large ribosomal subunit"/>
    <property type="evidence" value="ECO:0007669"/>
    <property type="project" value="InterPro"/>
</dbReference>
<dbReference type="GO" id="GO:0003735">
    <property type="term" value="F:structural constituent of ribosome"/>
    <property type="evidence" value="ECO:0007669"/>
    <property type="project" value="InterPro"/>
</dbReference>
<dbReference type="GO" id="GO:0006412">
    <property type="term" value="P:translation"/>
    <property type="evidence" value="ECO:0007669"/>
    <property type="project" value="UniProtKB-UniRule"/>
</dbReference>
<dbReference type="Gene3D" id="1.20.5.640">
    <property type="entry name" value="Single helix bin"/>
    <property type="match status" value="1"/>
</dbReference>
<dbReference type="HAMAP" id="MF_00340">
    <property type="entry name" value="Ribosomal_bL32"/>
    <property type="match status" value="1"/>
</dbReference>
<dbReference type="InterPro" id="IPR002677">
    <property type="entry name" value="Ribosomal_bL32"/>
</dbReference>
<dbReference type="InterPro" id="IPR044958">
    <property type="entry name" value="Ribosomal_bL32_plant/cyanobact"/>
</dbReference>
<dbReference type="InterPro" id="IPR011332">
    <property type="entry name" value="Ribosomal_zn-bd"/>
</dbReference>
<dbReference type="PANTHER" id="PTHR36083">
    <property type="entry name" value="50S RIBOSOMAL PROTEIN L32, CHLOROPLASTIC"/>
    <property type="match status" value="1"/>
</dbReference>
<dbReference type="PANTHER" id="PTHR36083:SF1">
    <property type="entry name" value="LARGE RIBOSOMAL SUBUNIT PROTEIN BL32C"/>
    <property type="match status" value="1"/>
</dbReference>
<dbReference type="Pfam" id="PF01783">
    <property type="entry name" value="Ribosomal_L32p"/>
    <property type="match status" value="1"/>
</dbReference>
<dbReference type="SUPFAM" id="SSF57829">
    <property type="entry name" value="Zn-binding ribosomal proteins"/>
    <property type="match status" value="1"/>
</dbReference>
<name>RL32_SYNS9</name>
<comment type="similarity">
    <text evidence="1">Belongs to the bacterial ribosomal protein bL32 family.</text>
</comment>
<feature type="chain" id="PRO_0000296584" description="Large ribosomal subunit protein bL32">
    <location>
        <begin position="1"/>
        <end position="58"/>
    </location>
</feature>
<feature type="region of interest" description="Disordered" evidence="2">
    <location>
        <begin position="1"/>
        <end position="23"/>
    </location>
</feature>
<feature type="compositionally biased region" description="Basic residues" evidence="2">
    <location>
        <begin position="1"/>
        <end position="15"/>
    </location>
</feature>
<organism>
    <name type="scientific">Synechococcus sp. (strain CC9902)</name>
    <dbReference type="NCBI Taxonomy" id="316279"/>
    <lineage>
        <taxon>Bacteria</taxon>
        <taxon>Bacillati</taxon>
        <taxon>Cyanobacteriota</taxon>
        <taxon>Cyanophyceae</taxon>
        <taxon>Synechococcales</taxon>
        <taxon>Synechococcaceae</taxon>
        <taxon>Synechococcus</taxon>
    </lineage>
</organism>
<accession>Q3AXR9</accession>
<sequence>MAVPKKKTSKAKRNQRSATWKGKAAIAAKRAMSIGKSVLSGRAQGFVYPVSDTDEAEA</sequence>
<gene>
    <name evidence="1" type="primary">rpmF</name>
    <name evidence="1" type="synonym">rpl32</name>
    <name type="ordered locus">Syncc9902_1153</name>
</gene>
<keyword id="KW-1185">Reference proteome</keyword>
<keyword id="KW-0687">Ribonucleoprotein</keyword>
<keyword id="KW-0689">Ribosomal protein</keyword>
<evidence type="ECO:0000255" key="1">
    <source>
        <dbReference type="HAMAP-Rule" id="MF_00340"/>
    </source>
</evidence>
<evidence type="ECO:0000256" key="2">
    <source>
        <dbReference type="SAM" id="MobiDB-lite"/>
    </source>
</evidence>
<evidence type="ECO:0000305" key="3"/>
<protein>
    <recommendedName>
        <fullName evidence="1">Large ribosomal subunit protein bL32</fullName>
    </recommendedName>
    <alternativeName>
        <fullName evidence="3">50S ribosomal protein L32</fullName>
    </alternativeName>
</protein>
<proteinExistence type="inferred from homology"/>
<reference key="1">
    <citation type="submission" date="2005-08" db="EMBL/GenBank/DDBJ databases">
        <title>Complete sequence of Synechococcus sp. CC9902.</title>
        <authorList>
            <person name="Copeland A."/>
            <person name="Lucas S."/>
            <person name="Lapidus A."/>
            <person name="Barry K."/>
            <person name="Detter J.C."/>
            <person name="Glavina T."/>
            <person name="Hammon N."/>
            <person name="Israni S."/>
            <person name="Pitluck S."/>
            <person name="Martinez M."/>
            <person name="Schmutz J."/>
            <person name="Larimer F."/>
            <person name="Land M."/>
            <person name="Kyrpides N."/>
            <person name="Ivanova N."/>
            <person name="Richardson P."/>
        </authorList>
    </citation>
    <scope>NUCLEOTIDE SEQUENCE [LARGE SCALE GENOMIC DNA]</scope>
    <source>
        <strain>CC9902</strain>
    </source>
</reference>